<comment type="function">
    <text evidence="1">Binds directly to 23S ribosomal RNA and is necessary for the in vitro assembly process of the 50S ribosomal subunit. It is not involved in the protein synthesizing functions of that subunit.</text>
</comment>
<comment type="similarity">
    <text evidence="1">Belongs to the bacterial ribosomal protein bL20 family.</text>
</comment>
<evidence type="ECO:0000255" key="1">
    <source>
        <dbReference type="HAMAP-Rule" id="MF_00382"/>
    </source>
</evidence>
<evidence type="ECO:0000305" key="2"/>
<dbReference type="EMBL" id="CP000010">
    <property type="protein sequence ID" value="AAU49315.1"/>
    <property type="molecule type" value="Genomic_DNA"/>
</dbReference>
<dbReference type="RefSeq" id="WP_004192938.1">
    <property type="nucleotide sequence ID" value="NC_006348.1"/>
</dbReference>
<dbReference type="RefSeq" id="YP_102784.1">
    <property type="nucleotide sequence ID" value="NC_006348.1"/>
</dbReference>
<dbReference type="SMR" id="Q62KI5"/>
<dbReference type="GeneID" id="98102114"/>
<dbReference type="KEGG" id="bma:BMA1093"/>
<dbReference type="PATRIC" id="fig|243160.12.peg.1126"/>
<dbReference type="eggNOG" id="COG0292">
    <property type="taxonomic scope" value="Bacteria"/>
</dbReference>
<dbReference type="HOGENOM" id="CLU_123265_0_1_4"/>
<dbReference type="PRO" id="PR:Q62KI5"/>
<dbReference type="Proteomes" id="UP000006693">
    <property type="component" value="Chromosome 1"/>
</dbReference>
<dbReference type="GO" id="GO:1990904">
    <property type="term" value="C:ribonucleoprotein complex"/>
    <property type="evidence" value="ECO:0007669"/>
    <property type="project" value="UniProtKB-KW"/>
</dbReference>
<dbReference type="GO" id="GO:0005840">
    <property type="term" value="C:ribosome"/>
    <property type="evidence" value="ECO:0007669"/>
    <property type="project" value="UniProtKB-KW"/>
</dbReference>
<dbReference type="GO" id="GO:0019843">
    <property type="term" value="F:rRNA binding"/>
    <property type="evidence" value="ECO:0007669"/>
    <property type="project" value="UniProtKB-UniRule"/>
</dbReference>
<dbReference type="GO" id="GO:0003735">
    <property type="term" value="F:structural constituent of ribosome"/>
    <property type="evidence" value="ECO:0007669"/>
    <property type="project" value="InterPro"/>
</dbReference>
<dbReference type="GO" id="GO:0000027">
    <property type="term" value="P:ribosomal large subunit assembly"/>
    <property type="evidence" value="ECO:0007669"/>
    <property type="project" value="UniProtKB-UniRule"/>
</dbReference>
<dbReference type="GO" id="GO:0006412">
    <property type="term" value="P:translation"/>
    <property type="evidence" value="ECO:0007669"/>
    <property type="project" value="InterPro"/>
</dbReference>
<dbReference type="CDD" id="cd07026">
    <property type="entry name" value="Ribosomal_L20"/>
    <property type="match status" value="1"/>
</dbReference>
<dbReference type="FunFam" id="1.10.1900.20:FF:000001">
    <property type="entry name" value="50S ribosomal protein L20"/>
    <property type="match status" value="1"/>
</dbReference>
<dbReference type="Gene3D" id="6.10.160.10">
    <property type="match status" value="1"/>
</dbReference>
<dbReference type="Gene3D" id="1.10.1900.20">
    <property type="entry name" value="Ribosomal protein L20"/>
    <property type="match status" value="1"/>
</dbReference>
<dbReference type="HAMAP" id="MF_00382">
    <property type="entry name" value="Ribosomal_bL20"/>
    <property type="match status" value="1"/>
</dbReference>
<dbReference type="InterPro" id="IPR005813">
    <property type="entry name" value="Ribosomal_bL20"/>
</dbReference>
<dbReference type="InterPro" id="IPR049946">
    <property type="entry name" value="RIBOSOMAL_L20_CS"/>
</dbReference>
<dbReference type="InterPro" id="IPR035566">
    <property type="entry name" value="Ribosomal_protein_bL20_C"/>
</dbReference>
<dbReference type="NCBIfam" id="TIGR01032">
    <property type="entry name" value="rplT_bact"/>
    <property type="match status" value="1"/>
</dbReference>
<dbReference type="PANTHER" id="PTHR10986">
    <property type="entry name" value="39S RIBOSOMAL PROTEIN L20"/>
    <property type="match status" value="1"/>
</dbReference>
<dbReference type="Pfam" id="PF00453">
    <property type="entry name" value="Ribosomal_L20"/>
    <property type="match status" value="1"/>
</dbReference>
<dbReference type="PRINTS" id="PR00062">
    <property type="entry name" value="RIBOSOMALL20"/>
</dbReference>
<dbReference type="SUPFAM" id="SSF74731">
    <property type="entry name" value="Ribosomal protein L20"/>
    <property type="match status" value="1"/>
</dbReference>
<dbReference type="PROSITE" id="PS00937">
    <property type="entry name" value="RIBOSOMAL_L20"/>
    <property type="match status" value="1"/>
</dbReference>
<organism>
    <name type="scientific">Burkholderia mallei (strain ATCC 23344)</name>
    <dbReference type="NCBI Taxonomy" id="243160"/>
    <lineage>
        <taxon>Bacteria</taxon>
        <taxon>Pseudomonadati</taxon>
        <taxon>Pseudomonadota</taxon>
        <taxon>Betaproteobacteria</taxon>
        <taxon>Burkholderiales</taxon>
        <taxon>Burkholderiaceae</taxon>
        <taxon>Burkholderia</taxon>
        <taxon>pseudomallei group</taxon>
    </lineage>
</organism>
<proteinExistence type="inferred from homology"/>
<accession>Q62KI5</accession>
<gene>
    <name evidence="1" type="primary">rplT</name>
    <name type="ordered locus">BMA1093</name>
</gene>
<feature type="chain" id="PRO_0000177135" description="Large ribosomal subunit protein bL20">
    <location>
        <begin position="1"/>
        <end position="119"/>
    </location>
</feature>
<name>RL20_BURMA</name>
<protein>
    <recommendedName>
        <fullName evidence="1">Large ribosomal subunit protein bL20</fullName>
    </recommendedName>
    <alternativeName>
        <fullName evidence="2">50S ribosomal protein L20</fullName>
    </alternativeName>
</protein>
<sequence>MPRVKRGVTARARHKKIINLAKGYRGRRNNVYRIAKQAVMRAGQYAYRDRRNKKRVFRALWITRINAAVRQHDMTYSVFINGLKKASIELDRKVLADMAVFDKAAFAAIVKQVKAAVAA</sequence>
<reference key="1">
    <citation type="journal article" date="2004" name="Proc. Natl. Acad. Sci. U.S.A.">
        <title>Structural flexibility in the Burkholderia mallei genome.</title>
        <authorList>
            <person name="Nierman W.C."/>
            <person name="DeShazer D."/>
            <person name="Kim H.S."/>
            <person name="Tettelin H."/>
            <person name="Nelson K.E."/>
            <person name="Feldblyum T.V."/>
            <person name="Ulrich R.L."/>
            <person name="Ronning C.M."/>
            <person name="Brinkac L.M."/>
            <person name="Daugherty S.C."/>
            <person name="Davidsen T.D."/>
            <person name="DeBoy R.T."/>
            <person name="Dimitrov G."/>
            <person name="Dodson R.J."/>
            <person name="Durkin A.S."/>
            <person name="Gwinn M.L."/>
            <person name="Haft D.H."/>
            <person name="Khouri H.M."/>
            <person name="Kolonay J.F."/>
            <person name="Madupu R."/>
            <person name="Mohammoud Y."/>
            <person name="Nelson W.C."/>
            <person name="Radune D."/>
            <person name="Romero C.M."/>
            <person name="Sarria S."/>
            <person name="Selengut J."/>
            <person name="Shamblin C."/>
            <person name="Sullivan S.A."/>
            <person name="White O."/>
            <person name="Yu Y."/>
            <person name="Zafar N."/>
            <person name="Zhou L."/>
            <person name="Fraser C.M."/>
        </authorList>
    </citation>
    <scope>NUCLEOTIDE SEQUENCE [LARGE SCALE GENOMIC DNA]</scope>
    <source>
        <strain>ATCC 23344</strain>
    </source>
</reference>
<keyword id="KW-1185">Reference proteome</keyword>
<keyword id="KW-0687">Ribonucleoprotein</keyword>
<keyword id="KW-0689">Ribosomal protein</keyword>
<keyword id="KW-0694">RNA-binding</keyword>
<keyword id="KW-0699">rRNA-binding</keyword>